<gene>
    <name evidence="1" type="primary">rraA</name>
    <name type="ordered locus">EC55989_4407</name>
</gene>
<reference key="1">
    <citation type="journal article" date="2009" name="PLoS Genet.">
        <title>Organised genome dynamics in the Escherichia coli species results in highly diverse adaptive paths.</title>
        <authorList>
            <person name="Touchon M."/>
            <person name="Hoede C."/>
            <person name="Tenaillon O."/>
            <person name="Barbe V."/>
            <person name="Baeriswyl S."/>
            <person name="Bidet P."/>
            <person name="Bingen E."/>
            <person name="Bonacorsi S."/>
            <person name="Bouchier C."/>
            <person name="Bouvet O."/>
            <person name="Calteau A."/>
            <person name="Chiapello H."/>
            <person name="Clermont O."/>
            <person name="Cruveiller S."/>
            <person name="Danchin A."/>
            <person name="Diard M."/>
            <person name="Dossat C."/>
            <person name="Karoui M.E."/>
            <person name="Frapy E."/>
            <person name="Garry L."/>
            <person name="Ghigo J.M."/>
            <person name="Gilles A.M."/>
            <person name="Johnson J."/>
            <person name="Le Bouguenec C."/>
            <person name="Lescat M."/>
            <person name="Mangenot S."/>
            <person name="Martinez-Jehanne V."/>
            <person name="Matic I."/>
            <person name="Nassif X."/>
            <person name="Oztas S."/>
            <person name="Petit M.A."/>
            <person name="Pichon C."/>
            <person name="Rouy Z."/>
            <person name="Ruf C.S."/>
            <person name="Schneider D."/>
            <person name="Tourret J."/>
            <person name="Vacherie B."/>
            <person name="Vallenet D."/>
            <person name="Medigue C."/>
            <person name="Rocha E.P.C."/>
            <person name="Denamur E."/>
        </authorList>
    </citation>
    <scope>NUCLEOTIDE SEQUENCE [LARGE SCALE GENOMIC DNA]</scope>
    <source>
        <strain>55989 / EAEC</strain>
    </source>
</reference>
<dbReference type="EMBL" id="CU928145">
    <property type="protein sequence ID" value="CAV01131.1"/>
    <property type="molecule type" value="Genomic_DNA"/>
</dbReference>
<dbReference type="RefSeq" id="WP_000872908.1">
    <property type="nucleotide sequence ID" value="NZ_CP028304.1"/>
</dbReference>
<dbReference type="SMR" id="B7LA26"/>
<dbReference type="GeneID" id="93777969"/>
<dbReference type="KEGG" id="eck:EC55989_4407"/>
<dbReference type="HOGENOM" id="CLU_072626_4_0_6"/>
<dbReference type="Proteomes" id="UP000000746">
    <property type="component" value="Chromosome"/>
</dbReference>
<dbReference type="GO" id="GO:0005829">
    <property type="term" value="C:cytosol"/>
    <property type="evidence" value="ECO:0007669"/>
    <property type="project" value="TreeGrafter"/>
</dbReference>
<dbReference type="GO" id="GO:0060698">
    <property type="term" value="F:endoribonuclease inhibitor activity"/>
    <property type="evidence" value="ECO:0007669"/>
    <property type="project" value="UniProtKB-UniRule"/>
</dbReference>
<dbReference type="GO" id="GO:0019899">
    <property type="term" value="F:enzyme binding"/>
    <property type="evidence" value="ECO:0007669"/>
    <property type="project" value="UniProtKB-UniRule"/>
</dbReference>
<dbReference type="GO" id="GO:1902369">
    <property type="term" value="P:negative regulation of RNA catabolic process"/>
    <property type="evidence" value="ECO:0007669"/>
    <property type="project" value="TreeGrafter"/>
</dbReference>
<dbReference type="CDD" id="cd16841">
    <property type="entry name" value="RraA_family"/>
    <property type="match status" value="1"/>
</dbReference>
<dbReference type="FunFam" id="3.50.30.40:FF:000001">
    <property type="entry name" value="Regulator of ribonuclease activity A"/>
    <property type="match status" value="1"/>
</dbReference>
<dbReference type="Gene3D" id="3.50.30.40">
    <property type="entry name" value="Ribonuclease E inhibitor RraA/RraA-like"/>
    <property type="match status" value="1"/>
</dbReference>
<dbReference type="HAMAP" id="MF_00471">
    <property type="entry name" value="RraA"/>
    <property type="match status" value="1"/>
</dbReference>
<dbReference type="InterPro" id="IPR010203">
    <property type="entry name" value="RraA"/>
</dbReference>
<dbReference type="InterPro" id="IPR005493">
    <property type="entry name" value="RraA/RraA-like"/>
</dbReference>
<dbReference type="InterPro" id="IPR036704">
    <property type="entry name" value="RraA/RraA-like_sf"/>
</dbReference>
<dbReference type="InterPro" id="IPR014339">
    <property type="entry name" value="RraA_gpbac"/>
</dbReference>
<dbReference type="NCBIfam" id="TIGR01935">
    <property type="entry name" value="NOT-MenG"/>
    <property type="match status" value="1"/>
</dbReference>
<dbReference type="NCBIfam" id="NF006875">
    <property type="entry name" value="PRK09372.1"/>
    <property type="match status" value="1"/>
</dbReference>
<dbReference type="NCBIfam" id="TIGR02998">
    <property type="entry name" value="RraA_entero"/>
    <property type="match status" value="1"/>
</dbReference>
<dbReference type="PANTHER" id="PTHR33254">
    <property type="entry name" value="4-HYDROXY-4-METHYL-2-OXOGLUTARATE ALDOLASE 3-RELATED"/>
    <property type="match status" value="1"/>
</dbReference>
<dbReference type="PANTHER" id="PTHR33254:SF29">
    <property type="entry name" value="REGULATOR OF RIBONUCLEASE ACTIVITY A"/>
    <property type="match status" value="1"/>
</dbReference>
<dbReference type="Pfam" id="PF03737">
    <property type="entry name" value="RraA-like"/>
    <property type="match status" value="1"/>
</dbReference>
<dbReference type="SUPFAM" id="SSF89562">
    <property type="entry name" value="RraA-like"/>
    <property type="match status" value="1"/>
</dbReference>
<evidence type="ECO:0000255" key="1">
    <source>
        <dbReference type="HAMAP-Rule" id="MF_00471"/>
    </source>
</evidence>
<accession>B7LA26</accession>
<feature type="chain" id="PRO_1000135491" description="Regulator of ribonuclease activity A">
    <location>
        <begin position="1"/>
        <end position="161"/>
    </location>
</feature>
<comment type="function">
    <text evidence="1">Globally modulates RNA abundance by binding to RNase E (Rne) and regulating its endonucleolytic activity. Can modulate Rne action in a substrate-dependent manner by altering the composition of the degradosome. Modulates RNA-binding and helicase activities of the degradosome.</text>
</comment>
<comment type="subunit">
    <text evidence="1">Homotrimer. Binds to both RNA-binding sites in the C-terminal region of Rne and to RhlB.</text>
</comment>
<comment type="subcellular location">
    <subcellularLocation>
        <location evidence="1">Cytoplasm</location>
    </subcellularLocation>
</comment>
<comment type="similarity">
    <text evidence="1">Belongs to the RraA family.</text>
</comment>
<organism>
    <name type="scientific">Escherichia coli (strain 55989 / EAEC)</name>
    <dbReference type="NCBI Taxonomy" id="585055"/>
    <lineage>
        <taxon>Bacteria</taxon>
        <taxon>Pseudomonadati</taxon>
        <taxon>Pseudomonadota</taxon>
        <taxon>Gammaproteobacteria</taxon>
        <taxon>Enterobacterales</taxon>
        <taxon>Enterobacteriaceae</taxon>
        <taxon>Escherichia</taxon>
    </lineage>
</organism>
<protein>
    <recommendedName>
        <fullName evidence="1">Regulator of ribonuclease activity A</fullName>
    </recommendedName>
</protein>
<proteinExistence type="inferred from homology"/>
<name>RRAA_ECO55</name>
<keyword id="KW-0963">Cytoplasm</keyword>
<keyword id="KW-1185">Reference proteome</keyword>
<sequence>MKYDTSELCDIYQEDVNVVEPLFSNFGGRASFGGQIITVKCFEDNGLLYDLLEQNGRGRVLVVDGGGSVRRALVDAELARLAVQNEWEGLVIYGAVRQVDDLEELDIGIQAMAAIPVGAAGEGIGESDVRVNFGGVTFFSGDHLYADNTGIILSEDPLDIE</sequence>